<sequence length="238" mass="25708">MKELDLDAGNSGLKWRLVESGRVIDRGIIIYGANAQKWSMPTKGACRAFVSSVSSKEVDDAIREVLKDIKDVFWAKTASSYGSLVNAYADYASLGVDRWLALIAAYSKYPEDLCVIDCGTAVTVDYVDKFGVHKGGYIAPGGALMLKSLNVNTAALKGTYGYDSELIPGSSTRECIERGVYYMQKAFVLSVARRCAESRIVCTGGGVKALLGNDEAYTYVEDLVLDGLRIVANAVPVN</sequence>
<reference key="1">
    <citation type="journal article" date="2005" name="Nucleic Acids Res.">
        <title>Genomic blueprint of Hahella chejuensis, a marine microbe producing an algicidal agent.</title>
        <authorList>
            <person name="Jeong H."/>
            <person name="Yim J.H."/>
            <person name="Lee C."/>
            <person name="Choi S.-H."/>
            <person name="Park Y.K."/>
            <person name="Yoon S.H."/>
            <person name="Hur C.-G."/>
            <person name="Kang H.-Y."/>
            <person name="Kim D."/>
            <person name="Lee H.H."/>
            <person name="Park K.H."/>
            <person name="Park S.-H."/>
            <person name="Park H.-S."/>
            <person name="Lee H.K."/>
            <person name="Oh T.K."/>
            <person name="Kim J.F."/>
        </authorList>
    </citation>
    <scope>NUCLEOTIDE SEQUENCE [LARGE SCALE GENOMIC DNA]</scope>
    <source>
        <strain>KCTC 2396</strain>
    </source>
</reference>
<evidence type="ECO:0000255" key="1">
    <source>
        <dbReference type="HAMAP-Rule" id="MF_01274"/>
    </source>
</evidence>
<keyword id="KW-0067">ATP-binding</keyword>
<keyword id="KW-0173">Coenzyme A biosynthesis</keyword>
<keyword id="KW-0963">Cytoplasm</keyword>
<keyword id="KW-0418">Kinase</keyword>
<keyword id="KW-0479">Metal-binding</keyword>
<keyword id="KW-0547">Nucleotide-binding</keyword>
<keyword id="KW-0630">Potassium</keyword>
<keyword id="KW-1185">Reference proteome</keyword>
<keyword id="KW-0808">Transferase</keyword>
<organism>
    <name type="scientific">Hahella chejuensis (strain KCTC 2396)</name>
    <dbReference type="NCBI Taxonomy" id="349521"/>
    <lineage>
        <taxon>Bacteria</taxon>
        <taxon>Pseudomonadati</taxon>
        <taxon>Pseudomonadota</taxon>
        <taxon>Gammaproteobacteria</taxon>
        <taxon>Oceanospirillales</taxon>
        <taxon>Hahellaceae</taxon>
        <taxon>Hahella</taxon>
    </lineage>
</organism>
<comment type="function">
    <text evidence="1">Catalyzes the phosphorylation of pantothenate (Pan), the first step in CoA biosynthesis.</text>
</comment>
<comment type="catalytic activity">
    <reaction evidence="1">
        <text>(R)-pantothenate + ATP = (R)-4'-phosphopantothenate + ADP + H(+)</text>
        <dbReference type="Rhea" id="RHEA:16373"/>
        <dbReference type="ChEBI" id="CHEBI:10986"/>
        <dbReference type="ChEBI" id="CHEBI:15378"/>
        <dbReference type="ChEBI" id="CHEBI:29032"/>
        <dbReference type="ChEBI" id="CHEBI:30616"/>
        <dbReference type="ChEBI" id="CHEBI:456216"/>
        <dbReference type="EC" id="2.7.1.33"/>
    </reaction>
</comment>
<comment type="cofactor">
    <cofactor evidence="1">
        <name>NH4(+)</name>
        <dbReference type="ChEBI" id="CHEBI:28938"/>
    </cofactor>
    <cofactor evidence="1">
        <name>K(+)</name>
        <dbReference type="ChEBI" id="CHEBI:29103"/>
    </cofactor>
    <text evidence="1">A monovalent cation. Ammonium or potassium.</text>
</comment>
<comment type="pathway">
    <text evidence="1">Cofactor biosynthesis; coenzyme A biosynthesis; CoA from (R)-pantothenate: step 1/5.</text>
</comment>
<comment type="subunit">
    <text evidence="1">Homodimer.</text>
</comment>
<comment type="subcellular location">
    <subcellularLocation>
        <location evidence="1">Cytoplasm</location>
    </subcellularLocation>
</comment>
<comment type="similarity">
    <text evidence="1">Belongs to the type III pantothenate kinase family.</text>
</comment>
<name>COAX_HAHCH</name>
<proteinExistence type="inferred from homology"/>
<protein>
    <recommendedName>
        <fullName evidence="1">Type III pantothenate kinase</fullName>
        <ecNumber evidence="1">2.7.1.33</ecNumber>
    </recommendedName>
    <alternativeName>
        <fullName evidence="1">PanK-III</fullName>
    </alternativeName>
    <alternativeName>
        <fullName evidence="1">Pantothenic acid kinase</fullName>
    </alternativeName>
</protein>
<dbReference type="EC" id="2.7.1.33" evidence="1"/>
<dbReference type="EMBL" id="CP000155">
    <property type="protein sequence ID" value="ABC32879.1"/>
    <property type="molecule type" value="Genomic_DNA"/>
</dbReference>
<dbReference type="RefSeq" id="WP_011399936.1">
    <property type="nucleotide sequence ID" value="NC_007645.1"/>
</dbReference>
<dbReference type="SMR" id="Q2S8Z5"/>
<dbReference type="STRING" id="349521.HCH_06233"/>
<dbReference type="KEGG" id="hch:HCH_06233"/>
<dbReference type="eggNOG" id="COG1521">
    <property type="taxonomic scope" value="Bacteria"/>
</dbReference>
<dbReference type="HOGENOM" id="CLU_066627_0_0_6"/>
<dbReference type="OrthoDB" id="9781305at2"/>
<dbReference type="UniPathway" id="UPA00241">
    <property type="reaction ID" value="UER00352"/>
</dbReference>
<dbReference type="Proteomes" id="UP000000238">
    <property type="component" value="Chromosome"/>
</dbReference>
<dbReference type="GO" id="GO:0005737">
    <property type="term" value="C:cytoplasm"/>
    <property type="evidence" value="ECO:0007669"/>
    <property type="project" value="UniProtKB-SubCell"/>
</dbReference>
<dbReference type="GO" id="GO:0005524">
    <property type="term" value="F:ATP binding"/>
    <property type="evidence" value="ECO:0007669"/>
    <property type="project" value="UniProtKB-UniRule"/>
</dbReference>
<dbReference type="GO" id="GO:0046872">
    <property type="term" value="F:metal ion binding"/>
    <property type="evidence" value="ECO:0007669"/>
    <property type="project" value="UniProtKB-KW"/>
</dbReference>
<dbReference type="GO" id="GO:0004594">
    <property type="term" value="F:pantothenate kinase activity"/>
    <property type="evidence" value="ECO:0007669"/>
    <property type="project" value="UniProtKB-UniRule"/>
</dbReference>
<dbReference type="GO" id="GO:0015937">
    <property type="term" value="P:coenzyme A biosynthetic process"/>
    <property type="evidence" value="ECO:0007669"/>
    <property type="project" value="UniProtKB-UniRule"/>
</dbReference>
<dbReference type="CDD" id="cd24015">
    <property type="entry name" value="ASKHA_NBD_PanK-III"/>
    <property type="match status" value="1"/>
</dbReference>
<dbReference type="Gene3D" id="3.30.420.40">
    <property type="match status" value="2"/>
</dbReference>
<dbReference type="HAMAP" id="MF_01274">
    <property type="entry name" value="Pantothen_kinase_3"/>
    <property type="match status" value="1"/>
</dbReference>
<dbReference type="InterPro" id="IPR043129">
    <property type="entry name" value="ATPase_NBD"/>
</dbReference>
<dbReference type="InterPro" id="IPR004619">
    <property type="entry name" value="Type_III_PanK"/>
</dbReference>
<dbReference type="NCBIfam" id="TIGR00671">
    <property type="entry name" value="baf"/>
    <property type="match status" value="1"/>
</dbReference>
<dbReference type="PANTHER" id="PTHR34265">
    <property type="entry name" value="TYPE III PANTOTHENATE KINASE"/>
    <property type="match status" value="1"/>
</dbReference>
<dbReference type="PANTHER" id="PTHR34265:SF1">
    <property type="entry name" value="TYPE III PANTOTHENATE KINASE"/>
    <property type="match status" value="1"/>
</dbReference>
<dbReference type="Pfam" id="PF03309">
    <property type="entry name" value="Pan_kinase"/>
    <property type="match status" value="1"/>
</dbReference>
<dbReference type="SUPFAM" id="SSF53067">
    <property type="entry name" value="Actin-like ATPase domain"/>
    <property type="match status" value="2"/>
</dbReference>
<gene>
    <name evidence="1" type="primary">coaX</name>
    <name type="ordered locus">HCH_06233</name>
</gene>
<accession>Q2S8Z5</accession>
<feature type="chain" id="PRO_0000270876" description="Type III pantothenate kinase">
    <location>
        <begin position="1"/>
        <end position="238"/>
    </location>
</feature>
<feature type="active site" description="Proton acceptor" evidence="1">
    <location>
        <position position="97"/>
    </location>
</feature>
<feature type="binding site" evidence="1">
    <location>
        <begin position="7"/>
        <end position="14"/>
    </location>
    <ligand>
        <name>ATP</name>
        <dbReference type="ChEBI" id="CHEBI:30616"/>
    </ligand>
</feature>
<feature type="binding site" evidence="1">
    <location>
        <position position="88"/>
    </location>
    <ligand>
        <name>substrate</name>
    </ligand>
</feature>
<feature type="binding site" evidence="1">
    <location>
        <begin position="95"/>
        <end position="98"/>
    </location>
    <ligand>
        <name>substrate</name>
    </ligand>
</feature>
<feature type="binding site" evidence="1">
    <location>
        <position position="117"/>
    </location>
    <ligand>
        <name>K(+)</name>
        <dbReference type="ChEBI" id="CHEBI:29103"/>
    </ligand>
</feature>
<feature type="binding site" evidence="1">
    <location>
        <position position="120"/>
    </location>
    <ligand>
        <name>ATP</name>
        <dbReference type="ChEBI" id="CHEBI:30616"/>
    </ligand>
</feature>
<feature type="binding site" evidence="1">
    <location>
        <position position="172"/>
    </location>
    <ligand>
        <name>substrate</name>
    </ligand>
</feature>